<dbReference type="SMR" id="P59944"/>
<dbReference type="GO" id="GO:0005576">
    <property type="term" value="C:extracellular region"/>
    <property type="evidence" value="ECO:0007669"/>
    <property type="project" value="UniProtKB-SubCell"/>
</dbReference>
<dbReference type="GO" id="GO:0008200">
    <property type="term" value="F:ion channel inhibitor activity"/>
    <property type="evidence" value="ECO:0007669"/>
    <property type="project" value="InterPro"/>
</dbReference>
<dbReference type="GO" id="GO:0015459">
    <property type="term" value="F:potassium channel regulator activity"/>
    <property type="evidence" value="ECO:0007669"/>
    <property type="project" value="UniProtKB-KW"/>
</dbReference>
<dbReference type="GO" id="GO:0090729">
    <property type="term" value="F:toxin activity"/>
    <property type="evidence" value="ECO:0007669"/>
    <property type="project" value="UniProtKB-KW"/>
</dbReference>
<dbReference type="GO" id="GO:0042742">
    <property type="term" value="P:defense response to bacterium"/>
    <property type="evidence" value="ECO:0007669"/>
    <property type="project" value="UniProtKB-KW"/>
</dbReference>
<dbReference type="GO" id="GO:0050832">
    <property type="term" value="P:defense response to fungus"/>
    <property type="evidence" value="ECO:0007669"/>
    <property type="project" value="UniProtKB-KW"/>
</dbReference>
<dbReference type="GO" id="GO:0031640">
    <property type="term" value="P:killing of cells of another organism"/>
    <property type="evidence" value="ECO:0007669"/>
    <property type="project" value="UniProtKB-KW"/>
</dbReference>
<dbReference type="Gene3D" id="3.30.30.10">
    <property type="entry name" value="Knottin, scorpion toxin-like"/>
    <property type="match status" value="1"/>
</dbReference>
<dbReference type="InterPro" id="IPR036574">
    <property type="entry name" value="Scorpion_toxin-like_sf"/>
</dbReference>
<dbReference type="InterPro" id="IPR001947">
    <property type="entry name" value="Scorpion_toxinS_K_inh"/>
</dbReference>
<dbReference type="Pfam" id="PF00451">
    <property type="entry name" value="Toxin_2"/>
    <property type="match status" value="1"/>
</dbReference>
<dbReference type="PRINTS" id="PR00286">
    <property type="entry name" value="CHARYBDTOXIN"/>
</dbReference>
<dbReference type="SUPFAM" id="SSF57095">
    <property type="entry name" value="Scorpion toxin-like"/>
    <property type="match status" value="1"/>
</dbReference>
<dbReference type="PROSITE" id="PS01138">
    <property type="entry name" value="SCORP_SHORT_TOXIN"/>
    <property type="match status" value="1"/>
</dbReference>
<evidence type="ECO:0000250" key="1"/>
<evidence type="ECO:0000250" key="2">
    <source>
        <dbReference type="UniProtKB" id="P13487"/>
    </source>
</evidence>
<evidence type="ECO:0000255" key="3"/>
<evidence type="ECO:0000303" key="4">
    <source>
    </source>
</evidence>
<evidence type="ECO:0000305" key="5"/>
<keyword id="KW-0044">Antibiotic</keyword>
<keyword id="KW-0929">Antimicrobial</keyword>
<keyword id="KW-1221">Calcium-activated potassium channel impairing toxin</keyword>
<keyword id="KW-0903">Direct protein sequencing</keyword>
<keyword id="KW-1015">Disulfide bond</keyword>
<keyword id="KW-0295">Fungicide</keyword>
<keyword id="KW-0872">Ion channel impairing toxin</keyword>
<keyword id="KW-0528">Neurotoxin</keyword>
<keyword id="KW-0632">Potassium channel impairing toxin</keyword>
<keyword id="KW-0873">Pyrrolidone carboxylic acid</keyword>
<keyword id="KW-0964">Secreted</keyword>
<keyword id="KW-0800">Toxin</keyword>
<keyword id="KW-1220">Voltage-gated potassium channel impairing toxin</keyword>
<feature type="chain" id="PRO_0000044892" description="Potassium channel toxin alpha-KTx 1.13">
    <location>
        <begin position="1"/>
        <end position="37"/>
    </location>
</feature>
<feature type="region of interest" description="Interaction with Ca(2+)-activated K(+) channels" evidence="3">
    <location>
        <begin position="26"/>
        <end position="33"/>
    </location>
</feature>
<feature type="site" description="Basic residue of the functional dyad" evidence="1">
    <location>
        <position position="27"/>
    </location>
</feature>
<feature type="site" description="Aromatic residue of the functional dyad" evidence="1">
    <location>
        <position position="36"/>
    </location>
</feature>
<feature type="modified residue" description="Pyrrolidone carboxylic acid" evidence="2">
    <location>
        <position position="1"/>
    </location>
</feature>
<feature type="disulfide bond" evidence="2">
    <location>
        <begin position="7"/>
        <end position="28"/>
    </location>
</feature>
<feature type="disulfide bond" evidence="2">
    <location>
        <begin position="13"/>
        <end position="33"/>
    </location>
</feature>
<feature type="disulfide bond" evidence="2">
    <location>
        <begin position="17"/>
        <end position="35"/>
    </location>
</feature>
<organism>
    <name type="scientific">Leiurus hebraeus</name>
    <name type="common">Hebrew deathstalker scorpion</name>
    <name type="synonym">Leiurus quinquestriatus hebraeus</name>
    <dbReference type="NCBI Taxonomy" id="2899558"/>
    <lineage>
        <taxon>Eukaryota</taxon>
        <taxon>Metazoa</taxon>
        <taxon>Ecdysozoa</taxon>
        <taxon>Arthropoda</taxon>
        <taxon>Chelicerata</taxon>
        <taxon>Arachnida</taxon>
        <taxon>Scorpiones</taxon>
        <taxon>Buthida</taxon>
        <taxon>Buthoidea</taxon>
        <taxon>Buthidae</taxon>
        <taxon>Leiurus</taxon>
    </lineage>
</organism>
<reference key="1">
    <citation type="journal article" date="1999" name="J. Mol. Evol.">
        <title>Dynamic diversification from a putative common ancestor of scorpion toxins affecting sodium, potassium, and chloride channels.</title>
        <authorList>
            <person name="Froy O."/>
            <person name="Sagiv T."/>
            <person name="Poreh M."/>
            <person name="Urbach D."/>
            <person name="Zilberberg N."/>
            <person name="Gurevitz M."/>
        </authorList>
    </citation>
    <scope>PROTEIN SEQUENCE</scope>
    <source>
        <tissue>Venom</tissue>
    </source>
</reference>
<protein>
    <recommendedName>
        <fullName>Potassium channel toxin alpha-KTx 1.13</fullName>
    </recommendedName>
    <alternativeName>
        <fullName evidence="4">Charybdotoxin c</fullName>
        <shortName evidence="4">ChTx-c</shortName>
    </alternativeName>
</protein>
<comment type="function">
    <text evidence="2">Potent selective inhibitor of high conductance (maxi-K), different medium and small conductance calcium-activated potassium channels (KCa1.1/KCNMA1 and others), as well as a voltage-dependent potassium channel (Kv1.3/KCNA3&gt;Kv1.2/KCNA2&gt;Kv1.6/KCNA3&gt;&gt;Shaker/Sh). It blocks channel activity by a simple bimolecular inhibition process.</text>
</comment>
<comment type="function">
    <text evidence="2">Has a pH-specific antimicrobial activity against bacteria (B.subtilis, E.coli and S.aureus) and the fungus C.albicans.</text>
</comment>
<comment type="subcellular location">
    <subcellularLocation>
        <location evidence="2">Secreted</location>
    </subcellularLocation>
</comment>
<comment type="tissue specificity">
    <text evidence="5">Expressed by the venom gland.</text>
</comment>
<comment type="domain">
    <text evidence="2">Has the structural arrangement of an alpha-helix connected to a beta-sheet by disulfide bonds (CSalpha/beta).</text>
</comment>
<comment type="similarity">
    <text evidence="5">Belongs to the short scorpion toxin superfamily. Potassium channel inhibitor family. Alpha-KTx 01 subfamily.</text>
</comment>
<name>KAX1D_LEIHE</name>
<accession>P59944</accession>
<sequence>QFTNVSCTTSKECWSVCEKLYNTSRGKCMNKKCRCYS</sequence>
<proteinExistence type="evidence at protein level"/>